<protein>
    <recommendedName>
        <fullName>Protein transport protein Sec61 subunit alpha isoform 1</fullName>
        <shortName>Sec61 alpha-1</shortName>
    </recommendedName>
</protein>
<accession>Q5R5L5</accession>
<accession>Q5R785</accession>
<accession>Q5R9P8</accession>
<feature type="chain" id="PRO_0000131793" description="Protein transport protein Sec61 subunit alpha isoform 1">
    <location>
        <begin position="1"/>
        <end position="476"/>
    </location>
</feature>
<feature type="topological domain" description="Cytoplasmic" evidence="4">
    <location>
        <begin position="1"/>
        <end position="32"/>
    </location>
</feature>
<feature type="transmembrane region" description="Helical" evidence="4">
    <location>
        <begin position="33"/>
        <end position="53"/>
    </location>
</feature>
<feature type="topological domain" description="Lumenal" evidence="4">
    <location>
        <begin position="54"/>
        <end position="75"/>
    </location>
</feature>
<feature type="transmembrane region" description="Helical" evidence="4">
    <location>
        <begin position="76"/>
        <end position="96"/>
    </location>
</feature>
<feature type="topological domain" description="Cytoplasmic" evidence="4">
    <location>
        <begin position="97"/>
        <end position="117"/>
    </location>
</feature>
<feature type="transmembrane region" description="Helical" evidence="4">
    <location>
        <begin position="118"/>
        <end position="138"/>
    </location>
</feature>
<feature type="topological domain" description="Lumenal" evidence="4">
    <location>
        <begin position="139"/>
        <end position="144"/>
    </location>
</feature>
<feature type="transmembrane region" description="Helical" evidence="4">
    <location>
        <begin position="145"/>
        <end position="165"/>
    </location>
</feature>
<feature type="topological domain" description="Cytoplasmic" evidence="4">
    <location>
        <begin position="166"/>
        <end position="172"/>
    </location>
</feature>
<feature type="transmembrane region" description="Helical" evidence="4">
    <location>
        <begin position="173"/>
        <end position="193"/>
    </location>
</feature>
<feature type="topological domain" description="Lumenal" evidence="4">
    <location>
        <begin position="194"/>
        <end position="202"/>
    </location>
</feature>
<feature type="transmembrane region" description="Helical" evidence="4">
    <location>
        <begin position="203"/>
        <end position="220"/>
    </location>
</feature>
<feature type="topological domain" description="Cytoplasmic" evidence="4">
    <location>
        <begin position="221"/>
        <end position="240"/>
    </location>
</feature>
<feature type="transmembrane region" description="Helical" evidence="4">
    <location>
        <begin position="241"/>
        <end position="261"/>
    </location>
</feature>
<feature type="topological domain" description="Lumenal" evidence="4">
    <location>
        <begin position="262"/>
        <end position="288"/>
    </location>
</feature>
<feature type="transmembrane region" description="Helical" evidence="4">
    <location>
        <begin position="289"/>
        <end position="309"/>
    </location>
</feature>
<feature type="topological domain" description="Cytoplasmic" evidence="4">
    <location>
        <begin position="310"/>
        <end position="420"/>
    </location>
</feature>
<feature type="transmembrane region" description="Helical" evidence="4">
    <location>
        <begin position="421"/>
        <end position="441"/>
    </location>
</feature>
<feature type="transmembrane region" description="Helical" evidence="4">
    <location>
        <begin position="442"/>
        <end position="462"/>
    </location>
</feature>
<feature type="topological domain" description="Cytoplasmic" evidence="4">
    <location>
        <begin position="463"/>
        <end position="476"/>
    </location>
</feature>
<feature type="sequence conflict" description="In Ref. 1; CAH91512." evidence="5" ref="1">
    <original>Y</original>
    <variation>H</variation>
    <location>
        <position position="344"/>
    </location>
</feature>
<gene>
    <name type="primary">SEC61A1</name>
    <name type="synonym">SEC61A</name>
</gene>
<dbReference type="EMBL" id="CR859335">
    <property type="protein sequence ID" value="CAH91512.1"/>
    <property type="molecule type" value="mRNA"/>
</dbReference>
<dbReference type="EMBL" id="CR860233">
    <property type="protein sequence ID" value="CAH92375.1"/>
    <property type="molecule type" value="mRNA"/>
</dbReference>
<dbReference type="EMBL" id="CR860842">
    <property type="protein sequence ID" value="CAH92951.1"/>
    <property type="molecule type" value="mRNA"/>
</dbReference>
<dbReference type="RefSeq" id="NP_001126739.1">
    <property type="nucleotide sequence ID" value="NM_001133267.1"/>
</dbReference>
<dbReference type="SMR" id="Q5R5L5"/>
<dbReference type="FunCoup" id="Q5R5L5">
    <property type="interactions" value="1578"/>
</dbReference>
<dbReference type="STRING" id="9601.ENSPPYP00000015030"/>
<dbReference type="Ensembl" id="ENSPPYT00000015631.3">
    <property type="protein sequence ID" value="ENSPPYP00000015030.2"/>
    <property type="gene ID" value="ENSPPYG00000013438.3"/>
</dbReference>
<dbReference type="GeneID" id="100173741"/>
<dbReference type="KEGG" id="pon:100173741"/>
<dbReference type="CTD" id="29927"/>
<dbReference type="eggNOG" id="KOG1373">
    <property type="taxonomic scope" value="Eukaryota"/>
</dbReference>
<dbReference type="GeneTree" id="ENSGT00390000003721"/>
<dbReference type="HOGENOM" id="CLU_031763_2_0_1"/>
<dbReference type="InParanoid" id="Q5R5L5"/>
<dbReference type="OrthoDB" id="420669at2759"/>
<dbReference type="TreeFam" id="TF300348"/>
<dbReference type="Proteomes" id="UP000001595">
    <property type="component" value="Chromosome 3"/>
</dbReference>
<dbReference type="GO" id="GO:0005789">
    <property type="term" value="C:endoplasmic reticulum membrane"/>
    <property type="evidence" value="ECO:0000250"/>
    <property type="project" value="UniProtKB"/>
</dbReference>
<dbReference type="GO" id="GO:0005262">
    <property type="term" value="F:calcium channel activity"/>
    <property type="evidence" value="ECO:0000250"/>
    <property type="project" value="UniProtKB"/>
</dbReference>
<dbReference type="GO" id="GO:0043022">
    <property type="term" value="F:ribosome binding"/>
    <property type="evidence" value="ECO:0000250"/>
    <property type="project" value="UniProtKB"/>
</dbReference>
<dbReference type="GO" id="GO:0006613">
    <property type="term" value="P:cotranslational protein targeting to membrane"/>
    <property type="evidence" value="ECO:0000250"/>
    <property type="project" value="UniProtKB"/>
</dbReference>
<dbReference type="GO" id="GO:0031204">
    <property type="term" value="P:post-translational protein targeting to membrane, translocation"/>
    <property type="evidence" value="ECO:0000250"/>
    <property type="project" value="UniProtKB"/>
</dbReference>
<dbReference type="GO" id="GO:0039019">
    <property type="term" value="P:pronephric nephron development"/>
    <property type="evidence" value="ECO:0000250"/>
    <property type="project" value="UniProtKB"/>
</dbReference>
<dbReference type="GO" id="GO:0045048">
    <property type="term" value="P:protein insertion into ER membrane"/>
    <property type="evidence" value="ECO:0000250"/>
    <property type="project" value="UniProtKB"/>
</dbReference>
<dbReference type="GO" id="GO:0045047">
    <property type="term" value="P:protein targeting to ER"/>
    <property type="evidence" value="ECO:0000250"/>
    <property type="project" value="UniProtKB"/>
</dbReference>
<dbReference type="FunFam" id="1.10.3370.10:FF:000002">
    <property type="entry name" value="Transport Sec61 subunit alpha isoform 2"/>
    <property type="match status" value="1"/>
</dbReference>
<dbReference type="Gene3D" id="1.10.3370.10">
    <property type="entry name" value="SecY subunit domain"/>
    <property type="match status" value="1"/>
</dbReference>
<dbReference type="InterPro" id="IPR002208">
    <property type="entry name" value="SecY/SEC61-alpha"/>
</dbReference>
<dbReference type="InterPro" id="IPR030659">
    <property type="entry name" value="SecY_CS"/>
</dbReference>
<dbReference type="InterPro" id="IPR023201">
    <property type="entry name" value="SecY_dom_sf"/>
</dbReference>
<dbReference type="InterPro" id="IPR019561">
    <property type="entry name" value="Translocon_Sec61/SecY_plug_dom"/>
</dbReference>
<dbReference type="NCBIfam" id="TIGR00967">
    <property type="entry name" value="3a0501s007"/>
    <property type="match status" value="1"/>
</dbReference>
<dbReference type="NCBIfam" id="NF006341">
    <property type="entry name" value="PRK08568.1-5"/>
    <property type="match status" value="1"/>
</dbReference>
<dbReference type="PANTHER" id="PTHR10906">
    <property type="entry name" value="SECY/SEC61-ALPHA FAMILY MEMBER"/>
    <property type="match status" value="1"/>
</dbReference>
<dbReference type="Pfam" id="PF10559">
    <property type="entry name" value="Plug_translocon"/>
    <property type="match status" value="1"/>
</dbReference>
<dbReference type="Pfam" id="PF00344">
    <property type="entry name" value="SecY"/>
    <property type="match status" value="1"/>
</dbReference>
<dbReference type="PIRSF" id="PIRSF004557">
    <property type="entry name" value="SecY"/>
    <property type="match status" value="1"/>
</dbReference>
<dbReference type="SUPFAM" id="SSF103491">
    <property type="entry name" value="Preprotein translocase SecY subunit"/>
    <property type="match status" value="1"/>
</dbReference>
<dbReference type="PROSITE" id="PS00755">
    <property type="entry name" value="SECY_1"/>
    <property type="match status" value="1"/>
</dbReference>
<dbReference type="PROSITE" id="PS00756">
    <property type="entry name" value="SECY_2"/>
    <property type="match status" value="1"/>
</dbReference>
<keyword id="KW-0217">Developmental protein</keyword>
<keyword id="KW-0256">Endoplasmic reticulum</keyword>
<keyword id="KW-0472">Membrane</keyword>
<keyword id="KW-0653">Protein transport</keyword>
<keyword id="KW-1185">Reference proteome</keyword>
<keyword id="KW-0811">Translocation</keyword>
<keyword id="KW-0812">Transmembrane</keyword>
<keyword id="KW-1133">Transmembrane helix</keyword>
<keyword id="KW-0813">Transport</keyword>
<sequence>MAIKFLEVIKPFCVILPEIQKPERKIQFKEKVLWTAITLFIFLVCCQIPLFGIMSSDSADPFYWMRVILASNRGTLMELGISPIVTSGLIMQLLAGAKIIEVGDTPKDRALFNGAQKLFGMIITIGQSIVYVMTGMYGDPSEMGAGICLLITIQLFVAGLIVLLLDELLQKGYGLGSGISLFIATNICETIVWKAFSPTTVNTGRGMEFEGAIIALFHLLATRTDKVRALREAFYRQNLPNLMNLIATIFVFAVVIYFQGFRVDLPIKSARYRGQYNTYPIKLFYTSNIPIILQSALVSNLYVISQMLSARFSGNLLVSLLGTWSDTSSGGPARAYPVGGLCYYLSPPESFGSVLEDPVHAVVYIVFMLGSCAFFSKTWIEVSGSSAKDVAKQLKEQQMVMRGHRETSMVHELNRYIPTAAAFGGLCIGALSVLADFLGAIGSGTGILLAVTIIYQYFEIFVKEQSEVGSMGALLF</sequence>
<evidence type="ECO:0000250" key="1">
    <source>
        <dbReference type="UniProtKB" id="P38377"/>
    </source>
</evidence>
<evidence type="ECO:0000250" key="2">
    <source>
        <dbReference type="UniProtKB" id="P61619"/>
    </source>
</evidence>
<evidence type="ECO:0000250" key="3">
    <source>
        <dbReference type="UniProtKB" id="P61620"/>
    </source>
</evidence>
<evidence type="ECO:0000255" key="4"/>
<evidence type="ECO:0000305" key="5"/>
<organism>
    <name type="scientific">Pongo abelii</name>
    <name type="common">Sumatran orangutan</name>
    <name type="synonym">Pongo pygmaeus abelii</name>
    <dbReference type="NCBI Taxonomy" id="9601"/>
    <lineage>
        <taxon>Eukaryota</taxon>
        <taxon>Metazoa</taxon>
        <taxon>Chordata</taxon>
        <taxon>Craniata</taxon>
        <taxon>Vertebrata</taxon>
        <taxon>Euteleostomi</taxon>
        <taxon>Mammalia</taxon>
        <taxon>Eutheria</taxon>
        <taxon>Euarchontoglires</taxon>
        <taxon>Primates</taxon>
        <taxon>Haplorrhini</taxon>
        <taxon>Catarrhini</taxon>
        <taxon>Hominidae</taxon>
        <taxon>Pongo</taxon>
    </lineage>
</organism>
<proteinExistence type="evidence at transcript level"/>
<comment type="function">
    <text evidence="2 3">Component of SEC61 channel-forming translocon complex that mediates transport of signal peptide-containing precursor polypeptides across the endoplasmic reticulum (ER). Forms a ribosome receptor and a gated pore in the ER membrane, both functions required for cotranslational translocation of nascent polypeptides. May cooperate with auxiliary protein SEC62, SEC63 and HSPA5/BiP to enable post-translational transport of small presecretory proteins. The SEC61 channel is also involved in ER membrane insertion of transmembrane proteins: it mediates membrane insertion of the first few transmembrane segments of proteins, while insertion of subsequent transmembrane regions of multi-pass membrane proteins is mediated by the multi-pass translocon (MPT) complex. The SEC61 channel cooperates with the translocating protein TRAM1 to import nascent proteins into the ER. Controls the passive efflux of calcium ions from the ER lumen to the cytosol through SEC61 channel, contributing to the maintenance of cellular calcium homeostasis (By similarity). Plays a critical role in nephrogenesis, specifically at pronephros stage (By similarity).</text>
</comment>
<comment type="subunit">
    <text evidence="1 2">The SEC61 channel-forming translocon complex consists of channel-forming core components SEC61A1, SEC61B and SEC61G and different auxiliary components such as SEC62 and SEC63 (By similarity). The SEC61 channel associates with the multi-pass translocon (MPT) complex (By similarity).</text>
</comment>
<comment type="subcellular location">
    <subcellularLocation>
        <location evidence="2">Endoplasmic reticulum membrane</location>
        <topology evidence="5">Multi-pass membrane protein</topology>
    </subcellularLocation>
    <text evidence="2">Localizes exclusively in granular structures in the endoplasmic reticulum (ER).</text>
</comment>
<comment type="similarity">
    <text evidence="5">Belongs to the SecY/SEC61-alpha family.</text>
</comment>
<name>S61A1_PONAB</name>
<reference key="1">
    <citation type="submission" date="2004-11" db="EMBL/GenBank/DDBJ databases">
        <authorList>
            <consortium name="The German cDNA consortium"/>
        </authorList>
    </citation>
    <scope>NUCLEOTIDE SEQUENCE [LARGE SCALE MRNA]</scope>
    <source>
        <tissue>Kidney</tissue>
    </source>
</reference>